<keyword id="KW-1035">Host cytoplasm</keyword>
<keyword id="KW-1048">Host nucleus</keyword>
<keyword id="KW-0426">Late protein</keyword>
<keyword id="KW-1185">Reference proteome</keyword>
<keyword id="KW-0946">Virion</keyword>
<keyword id="KW-0920">Virion tegument</keyword>
<reference key="1">
    <citation type="journal article" date="1991" name="J. Gen. Virol.">
        <title>Comparative sequence analysis of the long repeat regions and adjoining parts of the long unique regions in the genomes of herpes simplex viruses types 1 and 2.</title>
        <authorList>
            <person name="McGeoch D.J."/>
            <person name="Cunningham C."/>
            <person name="McIntyre G."/>
            <person name="Dolan A."/>
        </authorList>
    </citation>
    <scope>NUCLEOTIDE SEQUENCE [LARGE SCALE GENOMIC DNA]</scope>
</reference>
<reference key="2">
    <citation type="journal article" date="1998" name="Arch. Virol.">
        <title>Characterization of the UL16 gene product of herpes simplex virus type 2.</title>
        <authorList>
            <person name="Oshima S."/>
            <person name="Daikoku T."/>
            <person name="Shibata S."/>
            <person name="Yamada H."/>
            <person name="Goshima F."/>
            <person name="Nishiyama Y."/>
        </authorList>
    </citation>
    <scope>SUBCELLULAR LOCATION</scope>
</reference>
<organism>
    <name type="scientific">Human herpesvirus 2 (strain HG52)</name>
    <name type="common">HHV-2</name>
    <name type="synonym">Human herpes simplex virus 2</name>
    <dbReference type="NCBI Taxonomy" id="10315"/>
    <lineage>
        <taxon>Viruses</taxon>
        <taxon>Duplodnaviria</taxon>
        <taxon>Heunggongvirae</taxon>
        <taxon>Peploviricota</taxon>
        <taxon>Herviviricetes</taxon>
        <taxon>Herpesvirales</taxon>
        <taxon>Orthoherpesviridae</taxon>
        <taxon>Alphaherpesvirinae</taxon>
        <taxon>Simplexvirus</taxon>
        <taxon>Simplexvirus humanalpha2</taxon>
        <taxon>Human herpesvirus 2</taxon>
    </lineage>
</organism>
<evidence type="ECO:0000255" key="1">
    <source>
        <dbReference type="HAMAP-Rule" id="MF_04039"/>
    </source>
</evidence>
<evidence type="ECO:0000256" key="2">
    <source>
        <dbReference type="SAM" id="MobiDB-lite"/>
    </source>
</evidence>
<evidence type="ECO:0000269" key="3">
    <source>
    </source>
</evidence>
<comment type="function">
    <text evidence="1">Plays a critical role in cytoplasmic virus egress. Participates in the final step of tegumentation and envelope acquisition within the host cytoplasm by directly interacting with the capsid. Upon virion binding to target cell, a signaling cascade is triggered to disrupt the interaction with the capsid, thereby preparing capsid uncoating.</text>
</comment>
<comment type="subunit">
    <text evidence="1">Interacts with cytoplasmic envelopment protein 3 and with the capsid.</text>
</comment>
<comment type="subcellular location">
    <subcellularLocation>
        <location evidence="1">Virion tegument</location>
    </subcellularLocation>
    <subcellularLocation>
        <location evidence="1 3">Host cytoplasm</location>
    </subcellularLocation>
    <subcellularLocation>
        <location evidence="1 3">Host nucleus</location>
    </subcellularLocation>
    <text evidence="1">Localizes in the host nucleus up to 18 hours postinfection, but at later times localizes to punctate, cytoplasmic structures.</text>
</comment>
<comment type="similarity">
    <text evidence="1">Belongs to the herpesviridae cytoplasmic envelopment protein 2 family.</text>
</comment>
<name>CEP2_HHV2H</name>
<organismHost>
    <name type="scientific">Homo sapiens</name>
    <name type="common">Human</name>
    <dbReference type="NCBI Taxonomy" id="9606"/>
</organismHost>
<gene>
    <name type="primary">UL16</name>
</gene>
<feature type="chain" id="PRO_0000406176" description="Cytoplasmic envelopment protein 2">
    <location>
        <begin position="1"/>
        <end position="372"/>
    </location>
</feature>
<feature type="region of interest" description="Disordered" evidence="2">
    <location>
        <begin position="1"/>
        <end position="38"/>
    </location>
</feature>
<feature type="compositionally biased region" description="Low complexity" evidence="2">
    <location>
        <begin position="20"/>
        <end position="30"/>
    </location>
</feature>
<protein>
    <recommendedName>
        <fullName evidence="1">Cytoplasmic envelopment protein 2</fullName>
    </recommendedName>
</protein>
<accession>P89439</accession>
<dbReference type="EMBL" id="Z86099">
    <property type="protein sequence ID" value="CAB06776.1"/>
    <property type="molecule type" value="Genomic_DNA"/>
</dbReference>
<dbReference type="Proteomes" id="UP000001874">
    <property type="component" value="Segment"/>
</dbReference>
<dbReference type="GO" id="GO:0030430">
    <property type="term" value="C:host cell cytoplasm"/>
    <property type="evidence" value="ECO:0007669"/>
    <property type="project" value="UniProtKB-SubCell"/>
</dbReference>
<dbReference type="GO" id="GO:0042025">
    <property type="term" value="C:host cell nucleus"/>
    <property type="evidence" value="ECO:0007669"/>
    <property type="project" value="UniProtKB-SubCell"/>
</dbReference>
<dbReference type="GO" id="GO:0019033">
    <property type="term" value="C:viral tegument"/>
    <property type="evidence" value="ECO:0007669"/>
    <property type="project" value="UniProtKB-SubCell"/>
</dbReference>
<dbReference type="HAMAP" id="MF_04039">
    <property type="entry name" value="HSV_CEP2"/>
    <property type="match status" value="1"/>
</dbReference>
<dbReference type="InterPro" id="IPR004286">
    <property type="entry name" value="Herpes_UL16/UL94"/>
</dbReference>
<dbReference type="Pfam" id="PF03044">
    <property type="entry name" value="Herpes_UL16"/>
    <property type="match status" value="1"/>
</dbReference>
<proteinExistence type="inferred from homology"/>
<sequence>MAQRALWRPQATPGPPGAAAPPGHRGAPPDARAPDPGPEADLVARIANSVFVWRVVRGDERLKIFRCLTVLTEPLCQVALPDPDPERALFCEIFLYLTRPKALRLPSNTFFAIFFFNRERRYCATVHLRSVTHPRTPLLCTLAFGHLEAASPPEETPDPAAEQLADEPVAHELDGAYLVPTDTAPESGACCALGPGAWWHLPGGRIYCWAMDDDLGSLCPPGSRARHLGWLLSRITDPPGGGGACAPTAHIDSANALWRAPAVAEACPCVAPCMWSNMAQRTLAVRGDASLCQLLFGHPVDAVILRQATRRPRITAHLHEVVVGRDGAESVIRPTSAGWRLCVLSSYTSRLFATSCPAVARAVARASSSDYK</sequence>